<sequence>MTAIRYEFIKTCKQTGARLGRVHTPHGSFDTPTFMPVGTLATVKTMSPEELKAMDSGIILSNTYHLWLRPGHEIIREAGGLHKFMNWDRAILTDSGGFQVFSLSDFRRIEEEGVHFRNHLNGDKLFLSPEKAMEIQNALGSDIMMAFDECPPFPATFEYMKKSVERTSRWAERCLKAHERPQDQGLFGIVQGGEFEELRRQSAKDLVSMDFPGYAVGGLSVGEPKDIMNRVLEFTTPLLPDNKPRYLMGVGSPDSLIDGAIRGIDMFDCVLPTRIARNGTCMTSEGRLVVKNAKFARDFGPLDPNCDCYTCKNYSRAYIRHLMKCDETFGIRLTSYHNLHFLLNLMEQVRQAIREDRLGDFREEFFEQYGFNKPNAKNF</sequence>
<accession>A0RJ24</accession>
<comment type="function">
    <text evidence="1">Catalyzes the base-exchange of a guanine (G) residue with the queuine precursor 7-aminomethyl-7-deazaguanine (PreQ1) at position 34 (anticodon wobble position) in tRNAs with GU(N) anticodons (tRNA-Asp, -Asn, -His and -Tyr). Catalysis occurs through a double-displacement mechanism. The nucleophile active site attacks the C1' of nucleotide 34 to detach the guanine base from the RNA, forming a covalent enzyme-RNA intermediate. The proton acceptor active site deprotonates the incoming PreQ1, allowing a nucleophilic attack on the C1' of the ribose to form the product. After dissociation, two additional enzymatic reactions on the tRNA convert PreQ1 to queuine (Q), resulting in the hypermodified nucleoside queuosine (7-(((4,5-cis-dihydroxy-2-cyclopenten-1-yl)amino)methyl)-7-deazaguanosine).</text>
</comment>
<comment type="catalytic activity">
    <reaction evidence="1">
        <text>7-aminomethyl-7-carbaguanine + guanosine(34) in tRNA = 7-aminomethyl-7-carbaguanosine(34) in tRNA + guanine</text>
        <dbReference type="Rhea" id="RHEA:24104"/>
        <dbReference type="Rhea" id="RHEA-COMP:10341"/>
        <dbReference type="Rhea" id="RHEA-COMP:10342"/>
        <dbReference type="ChEBI" id="CHEBI:16235"/>
        <dbReference type="ChEBI" id="CHEBI:58703"/>
        <dbReference type="ChEBI" id="CHEBI:74269"/>
        <dbReference type="ChEBI" id="CHEBI:82833"/>
        <dbReference type="EC" id="2.4.2.29"/>
    </reaction>
</comment>
<comment type="cofactor">
    <cofactor evidence="1">
        <name>Zn(2+)</name>
        <dbReference type="ChEBI" id="CHEBI:29105"/>
    </cofactor>
    <text evidence="1">Binds 1 zinc ion per subunit.</text>
</comment>
<comment type="pathway">
    <text evidence="1">tRNA modification; tRNA-queuosine biosynthesis.</text>
</comment>
<comment type="subunit">
    <text evidence="1">Homodimer. Within each dimer, one monomer is responsible for RNA recognition and catalysis, while the other monomer binds to the replacement base PreQ1.</text>
</comment>
<comment type="similarity">
    <text evidence="1">Belongs to the queuine tRNA-ribosyltransferase family.</text>
</comment>
<feature type="chain" id="PRO_1000016764" description="Queuine tRNA-ribosyltransferase">
    <location>
        <begin position="1"/>
        <end position="379"/>
    </location>
</feature>
<feature type="region of interest" description="RNA binding" evidence="1">
    <location>
        <begin position="249"/>
        <end position="255"/>
    </location>
</feature>
<feature type="region of interest" description="RNA binding; important for wobble base 34 recognition" evidence="1">
    <location>
        <begin position="273"/>
        <end position="277"/>
    </location>
</feature>
<feature type="active site" description="Proton acceptor" evidence="1">
    <location>
        <position position="94"/>
    </location>
</feature>
<feature type="active site" description="Nucleophile" evidence="1">
    <location>
        <position position="268"/>
    </location>
</feature>
<feature type="binding site" evidence="1">
    <location>
        <begin position="94"/>
        <end position="98"/>
    </location>
    <ligand>
        <name>substrate</name>
    </ligand>
</feature>
<feature type="binding site" evidence="1">
    <location>
        <position position="148"/>
    </location>
    <ligand>
        <name>substrate</name>
    </ligand>
</feature>
<feature type="binding site" evidence="1">
    <location>
        <position position="191"/>
    </location>
    <ligand>
        <name>substrate</name>
    </ligand>
</feature>
<feature type="binding site" evidence="1">
    <location>
        <position position="218"/>
    </location>
    <ligand>
        <name>substrate</name>
    </ligand>
</feature>
<feature type="binding site" evidence="1">
    <location>
        <position position="306"/>
    </location>
    <ligand>
        <name>Zn(2+)</name>
        <dbReference type="ChEBI" id="CHEBI:29105"/>
    </ligand>
</feature>
<feature type="binding site" evidence="1">
    <location>
        <position position="308"/>
    </location>
    <ligand>
        <name>Zn(2+)</name>
        <dbReference type="ChEBI" id="CHEBI:29105"/>
    </ligand>
</feature>
<feature type="binding site" evidence="1">
    <location>
        <position position="311"/>
    </location>
    <ligand>
        <name>Zn(2+)</name>
        <dbReference type="ChEBI" id="CHEBI:29105"/>
    </ligand>
</feature>
<feature type="binding site" evidence="1">
    <location>
        <position position="337"/>
    </location>
    <ligand>
        <name>Zn(2+)</name>
        <dbReference type="ChEBI" id="CHEBI:29105"/>
    </ligand>
</feature>
<protein>
    <recommendedName>
        <fullName evidence="1">Queuine tRNA-ribosyltransferase</fullName>
        <ecNumber evidence="1">2.4.2.29</ecNumber>
    </recommendedName>
    <alternativeName>
        <fullName evidence="1">Guanine insertion enzyme</fullName>
    </alternativeName>
    <alternativeName>
        <fullName evidence="1">tRNA-guanine transglycosylase</fullName>
    </alternativeName>
</protein>
<organism>
    <name type="scientific">Bacillus thuringiensis (strain Al Hakam)</name>
    <dbReference type="NCBI Taxonomy" id="412694"/>
    <lineage>
        <taxon>Bacteria</taxon>
        <taxon>Bacillati</taxon>
        <taxon>Bacillota</taxon>
        <taxon>Bacilli</taxon>
        <taxon>Bacillales</taxon>
        <taxon>Bacillaceae</taxon>
        <taxon>Bacillus</taxon>
        <taxon>Bacillus cereus group</taxon>
    </lineage>
</organism>
<gene>
    <name evidence="1" type="primary">tgt</name>
    <name type="ordered locus">BALH_3997</name>
</gene>
<evidence type="ECO:0000255" key="1">
    <source>
        <dbReference type="HAMAP-Rule" id="MF_00168"/>
    </source>
</evidence>
<dbReference type="EC" id="2.4.2.29" evidence="1"/>
<dbReference type="EMBL" id="CP000485">
    <property type="protein sequence ID" value="ABK87217.1"/>
    <property type="molecule type" value="Genomic_DNA"/>
</dbReference>
<dbReference type="RefSeq" id="WP_000125362.1">
    <property type="nucleotide sequence ID" value="NC_008600.1"/>
</dbReference>
<dbReference type="SMR" id="A0RJ24"/>
<dbReference type="GeneID" id="92798989"/>
<dbReference type="KEGG" id="btl:BALH_3997"/>
<dbReference type="HOGENOM" id="CLU_022060_0_1_9"/>
<dbReference type="UniPathway" id="UPA00392"/>
<dbReference type="GO" id="GO:0005829">
    <property type="term" value="C:cytosol"/>
    <property type="evidence" value="ECO:0007669"/>
    <property type="project" value="TreeGrafter"/>
</dbReference>
<dbReference type="GO" id="GO:0046872">
    <property type="term" value="F:metal ion binding"/>
    <property type="evidence" value="ECO:0007669"/>
    <property type="project" value="UniProtKB-KW"/>
</dbReference>
<dbReference type="GO" id="GO:0008479">
    <property type="term" value="F:tRNA-guanosine(34) queuine transglycosylase activity"/>
    <property type="evidence" value="ECO:0007669"/>
    <property type="project" value="UniProtKB-UniRule"/>
</dbReference>
<dbReference type="GO" id="GO:0008616">
    <property type="term" value="P:queuosine biosynthetic process"/>
    <property type="evidence" value="ECO:0007669"/>
    <property type="project" value="UniProtKB-UniRule"/>
</dbReference>
<dbReference type="GO" id="GO:0002099">
    <property type="term" value="P:tRNA wobble guanine modification"/>
    <property type="evidence" value="ECO:0007669"/>
    <property type="project" value="TreeGrafter"/>
</dbReference>
<dbReference type="GO" id="GO:0101030">
    <property type="term" value="P:tRNA-guanine transglycosylation"/>
    <property type="evidence" value="ECO:0007669"/>
    <property type="project" value="InterPro"/>
</dbReference>
<dbReference type="FunFam" id="3.20.20.105:FF:000001">
    <property type="entry name" value="Queuine tRNA-ribosyltransferase"/>
    <property type="match status" value="1"/>
</dbReference>
<dbReference type="Gene3D" id="3.20.20.105">
    <property type="entry name" value="Queuine tRNA-ribosyltransferase-like"/>
    <property type="match status" value="1"/>
</dbReference>
<dbReference type="HAMAP" id="MF_00168">
    <property type="entry name" value="Q_tRNA_Tgt"/>
    <property type="match status" value="1"/>
</dbReference>
<dbReference type="InterPro" id="IPR050076">
    <property type="entry name" value="ArchSynthase1/Queuine_TRR"/>
</dbReference>
<dbReference type="InterPro" id="IPR004803">
    <property type="entry name" value="TGT"/>
</dbReference>
<dbReference type="InterPro" id="IPR036511">
    <property type="entry name" value="TGT-like_sf"/>
</dbReference>
<dbReference type="InterPro" id="IPR002616">
    <property type="entry name" value="tRNA_ribo_trans-like"/>
</dbReference>
<dbReference type="NCBIfam" id="TIGR00430">
    <property type="entry name" value="Q_tRNA_tgt"/>
    <property type="match status" value="1"/>
</dbReference>
<dbReference type="NCBIfam" id="TIGR00449">
    <property type="entry name" value="tgt_general"/>
    <property type="match status" value="1"/>
</dbReference>
<dbReference type="PANTHER" id="PTHR46499">
    <property type="entry name" value="QUEUINE TRNA-RIBOSYLTRANSFERASE"/>
    <property type="match status" value="1"/>
</dbReference>
<dbReference type="PANTHER" id="PTHR46499:SF1">
    <property type="entry name" value="QUEUINE TRNA-RIBOSYLTRANSFERASE"/>
    <property type="match status" value="1"/>
</dbReference>
<dbReference type="Pfam" id="PF01702">
    <property type="entry name" value="TGT"/>
    <property type="match status" value="1"/>
</dbReference>
<dbReference type="SUPFAM" id="SSF51713">
    <property type="entry name" value="tRNA-guanine transglycosylase"/>
    <property type="match status" value="1"/>
</dbReference>
<proteinExistence type="inferred from homology"/>
<reference key="1">
    <citation type="journal article" date="2007" name="J. Bacteriol.">
        <title>The complete genome sequence of Bacillus thuringiensis Al Hakam.</title>
        <authorList>
            <person name="Challacombe J.F."/>
            <person name="Altherr M.R."/>
            <person name="Xie G."/>
            <person name="Bhotika S.S."/>
            <person name="Brown N."/>
            <person name="Bruce D."/>
            <person name="Campbell C.S."/>
            <person name="Campbell M.L."/>
            <person name="Chen J."/>
            <person name="Chertkov O."/>
            <person name="Cleland C."/>
            <person name="Dimitrijevic M."/>
            <person name="Doggett N.A."/>
            <person name="Fawcett J.J."/>
            <person name="Glavina T."/>
            <person name="Goodwin L.A."/>
            <person name="Green L.D."/>
            <person name="Han C.S."/>
            <person name="Hill K.K."/>
            <person name="Hitchcock P."/>
            <person name="Jackson P.J."/>
            <person name="Keim P."/>
            <person name="Kewalramani A.R."/>
            <person name="Longmire J."/>
            <person name="Lucas S."/>
            <person name="Malfatti S."/>
            <person name="Martinez D."/>
            <person name="McMurry K."/>
            <person name="Meincke L.J."/>
            <person name="Misra M."/>
            <person name="Moseman B.L."/>
            <person name="Mundt M."/>
            <person name="Munk A.C."/>
            <person name="Okinaka R.T."/>
            <person name="Parson-Quintana B."/>
            <person name="Reilly L.P."/>
            <person name="Richardson P."/>
            <person name="Robinson D.L."/>
            <person name="Saunders E."/>
            <person name="Tapia R."/>
            <person name="Tesmer J.G."/>
            <person name="Thayer N."/>
            <person name="Thompson L.S."/>
            <person name="Tice H."/>
            <person name="Ticknor L.O."/>
            <person name="Wills P.L."/>
            <person name="Gilna P."/>
            <person name="Brettin T.S."/>
        </authorList>
    </citation>
    <scope>NUCLEOTIDE SEQUENCE [LARGE SCALE GENOMIC DNA]</scope>
    <source>
        <strain>Al Hakam</strain>
    </source>
</reference>
<keyword id="KW-0328">Glycosyltransferase</keyword>
<keyword id="KW-0479">Metal-binding</keyword>
<keyword id="KW-0671">Queuosine biosynthesis</keyword>
<keyword id="KW-0808">Transferase</keyword>
<keyword id="KW-0819">tRNA processing</keyword>
<keyword id="KW-0862">Zinc</keyword>
<name>TGT_BACAH</name>